<protein>
    <recommendedName>
        <fullName evidence="1">Lipoyl synthase, mitochondrial</fullName>
        <ecNumber evidence="1">2.8.1.8</ecNumber>
    </recommendedName>
    <alternativeName>
        <fullName evidence="1">Lipoate synthase</fullName>
        <shortName evidence="1">LS</shortName>
        <shortName evidence="1">Lip-syn</shortName>
    </alternativeName>
    <alternativeName>
        <fullName evidence="1">Lipoic acid synthase</fullName>
    </alternativeName>
</protein>
<comment type="function">
    <text evidence="1">Catalyzes the radical-mediated insertion of two sulfur atoms into the C-6 and C-8 positions of the octanoyl moiety bound to the lipoyl domains of lipoate-dependent enzymes, thereby converting the octanoylated domains into lipoylated derivatives.</text>
</comment>
<comment type="catalytic activity">
    <reaction evidence="1">
        <text>[[Fe-S] cluster scaffold protein carrying a second [4Fe-4S](2+) cluster] + N(6)-octanoyl-L-lysyl-[protein] + 2 oxidized [2Fe-2S]-[ferredoxin] + 2 S-adenosyl-L-methionine + 4 H(+) = [[Fe-S] cluster scaffold protein] + N(6)-[(R)-dihydrolipoyl]-L-lysyl-[protein] + 4 Fe(3+) + 2 hydrogen sulfide + 2 5'-deoxyadenosine + 2 L-methionine + 2 reduced [2Fe-2S]-[ferredoxin]</text>
        <dbReference type="Rhea" id="RHEA:16585"/>
        <dbReference type="Rhea" id="RHEA-COMP:9928"/>
        <dbReference type="Rhea" id="RHEA-COMP:10000"/>
        <dbReference type="Rhea" id="RHEA-COMP:10001"/>
        <dbReference type="Rhea" id="RHEA-COMP:10475"/>
        <dbReference type="Rhea" id="RHEA-COMP:14568"/>
        <dbReference type="Rhea" id="RHEA-COMP:14569"/>
        <dbReference type="ChEBI" id="CHEBI:15378"/>
        <dbReference type="ChEBI" id="CHEBI:17319"/>
        <dbReference type="ChEBI" id="CHEBI:29034"/>
        <dbReference type="ChEBI" id="CHEBI:29919"/>
        <dbReference type="ChEBI" id="CHEBI:33722"/>
        <dbReference type="ChEBI" id="CHEBI:33737"/>
        <dbReference type="ChEBI" id="CHEBI:33738"/>
        <dbReference type="ChEBI" id="CHEBI:57844"/>
        <dbReference type="ChEBI" id="CHEBI:59789"/>
        <dbReference type="ChEBI" id="CHEBI:78809"/>
        <dbReference type="ChEBI" id="CHEBI:83100"/>
        <dbReference type="EC" id="2.8.1.8"/>
    </reaction>
</comment>
<comment type="cofactor">
    <cofactor evidence="1">
        <name>[4Fe-4S] cluster</name>
        <dbReference type="ChEBI" id="CHEBI:49883"/>
    </cofactor>
    <text evidence="1">Binds 2 [4Fe-4S] clusters per subunit. One cluster is coordinated with 3 cysteines and an exchangeable S-adenosyl-L-methionine.</text>
</comment>
<comment type="pathway">
    <text evidence="1">Protein modification; protein lipoylation via endogenous pathway; protein N(6)-(lipoyl)lysine from octanoyl-[acyl-carrier-protein]: step 2/2.</text>
</comment>
<comment type="subcellular location">
    <subcellularLocation>
        <location evidence="1">Mitochondrion</location>
    </subcellularLocation>
</comment>
<comment type="miscellaneous">
    <text evidence="1">This protein may be expected to contain an N-terminal transit peptide but none has been predicted.</text>
</comment>
<comment type="similarity">
    <text evidence="1">Belongs to the radical SAM superfamily. Lipoyl synthase family.</text>
</comment>
<name>LIPA_YARLI</name>
<evidence type="ECO:0000255" key="1">
    <source>
        <dbReference type="HAMAP-Rule" id="MF_03123"/>
    </source>
</evidence>
<evidence type="ECO:0000255" key="2">
    <source>
        <dbReference type="PROSITE-ProRule" id="PRU01266"/>
    </source>
</evidence>
<reference key="1">
    <citation type="journal article" date="2004" name="Nature">
        <title>Genome evolution in yeasts.</title>
        <authorList>
            <person name="Dujon B."/>
            <person name="Sherman D."/>
            <person name="Fischer G."/>
            <person name="Durrens P."/>
            <person name="Casaregola S."/>
            <person name="Lafontaine I."/>
            <person name="de Montigny J."/>
            <person name="Marck C."/>
            <person name="Neuveglise C."/>
            <person name="Talla E."/>
            <person name="Goffard N."/>
            <person name="Frangeul L."/>
            <person name="Aigle M."/>
            <person name="Anthouard V."/>
            <person name="Babour A."/>
            <person name="Barbe V."/>
            <person name="Barnay S."/>
            <person name="Blanchin S."/>
            <person name="Beckerich J.-M."/>
            <person name="Beyne E."/>
            <person name="Bleykasten C."/>
            <person name="Boisrame A."/>
            <person name="Boyer J."/>
            <person name="Cattolico L."/>
            <person name="Confanioleri F."/>
            <person name="de Daruvar A."/>
            <person name="Despons L."/>
            <person name="Fabre E."/>
            <person name="Fairhead C."/>
            <person name="Ferry-Dumazet H."/>
            <person name="Groppi A."/>
            <person name="Hantraye F."/>
            <person name="Hennequin C."/>
            <person name="Jauniaux N."/>
            <person name="Joyet P."/>
            <person name="Kachouri R."/>
            <person name="Kerrest A."/>
            <person name="Koszul R."/>
            <person name="Lemaire M."/>
            <person name="Lesur I."/>
            <person name="Ma L."/>
            <person name="Muller H."/>
            <person name="Nicaud J.-M."/>
            <person name="Nikolski M."/>
            <person name="Oztas S."/>
            <person name="Ozier-Kalogeropoulos O."/>
            <person name="Pellenz S."/>
            <person name="Potier S."/>
            <person name="Richard G.-F."/>
            <person name="Straub M.-L."/>
            <person name="Suleau A."/>
            <person name="Swennen D."/>
            <person name="Tekaia F."/>
            <person name="Wesolowski-Louvel M."/>
            <person name="Westhof E."/>
            <person name="Wirth B."/>
            <person name="Zeniou-Meyer M."/>
            <person name="Zivanovic Y."/>
            <person name="Bolotin-Fukuhara M."/>
            <person name="Thierry A."/>
            <person name="Bouchier C."/>
            <person name="Caudron B."/>
            <person name="Scarpelli C."/>
            <person name="Gaillardin C."/>
            <person name="Weissenbach J."/>
            <person name="Wincker P."/>
            <person name="Souciet J.-L."/>
        </authorList>
    </citation>
    <scope>NUCLEOTIDE SEQUENCE [LARGE SCALE GENOMIC DNA]</scope>
    <source>
        <strain>CLIB 122 / E 150</strain>
    </source>
</reference>
<sequence length="351" mass="38779">MLKRQLHSASKRSATRFSDALNKGPSFDDFLTGRAGKAAAVDPVLAASSDGKRLPKWLKTEIPKGKNLHNIREDLRGLGLHTVCEEARCPNIGECWGGSDKSKATATIMLMGDTCTRGCRFCSVKTNRNPGPLDPNEPENTAVAISKWGLGYVVLTTVDRDDLSDGGSWHFADTVKRIKEKAPHILVETLSGDFRGNLDHVTTLAESGLDVFAHNMETVEALTPFVRDRRATFQQSLSVLRQAKVAVPDLITKTSIMLGFGETDEQVEDTLMQLRGVGVDIVTFGQYMRPTIRHLKVAEYVTPEKFDYWQKRAMDMGFLYCASGPLVRSSYKAGEVFIENVLKKRNAAKAV</sequence>
<proteinExistence type="inferred from homology"/>
<dbReference type="EC" id="2.8.1.8" evidence="1"/>
<dbReference type="EMBL" id="CR382131">
    <property type="protein sequence ID" value="CAG79377.1"/>
    <property type="molecule type" value="Genomic_DNA"/>
</dbReference>
<dbReference type="RefSeq" id="XP_503786.1">
    <property type="nucleotide sequence ID" value="XM_503786.1"/>
</dbReference>
<dbReference type="SMR" id="Q6C6C6"/>
<dbReference type="FunCoup" id="Q6C6C6">
    <property type="interactions" value="605"/>
</dbReference>
<dbReference type="STRING" id="284591.Q6C6C6"/>
<dbReference type="EnsemblFungi" id="CAG79377">
    <property type="protein sequence ID" value="CAG79377"/>
    <property type="gene ID" value="YALI0_E10571g"/>
</dbReference>
<dbReference type="KEGG" id="yli:2912634"/>
<dbReference type="VEuPathDB" id="FungiDB:YALI0_E10571g"/>
<dbReference type="HOGENOM" id="CLU_033144_0_1_1"/>
<dbReference type="InParanoid" id="Q6C6C6"/>
<dbReference type="OMA" id="PYCDIDF"/>
<dbReference type="OrthoDB" id="118794at4891"/>
<dbReference type="UniPathway" id="UPA00538">
    <property type="reaction ID" value="UER00593"/>
</dbReference>
<dbReference type="Proteomes" id="UP000001300">
    <property type="component" value="Chromosome E"/>
</dbReference>
<dbReference type="GO" id="GO:0005739">
    <property type="term" value="C:mitochondrion"/>
    <property type="evidence" value="ECO:0000318"/>
    <property type="project" value="GO_Central"/>
</dbReference>
<dbReference type="GO" id="GO:0051539">
    <property type="term" value="F:4 iron, 4 sulfur cluster binding"/>
    <property type="evidence" value="ECO:0007669"/>
    <property type="project" value="UniProtKB-UniRule"/>
</dbReference>
<dbReference type="GO" id="GO:0016992">
    <property type="term" value="F:lipoate synthase activity"/>
    <property type="evidence" value="ECO:0000318"/>
    <property type="project" value="GO_Central"/>
</dbReference>
<dbReference type="GO" id="GO:0046872">
    <property type="term" value="F:metal ion binding"/>
    <property type="evidence" value="ECO:0007669"/>
    <property type="project" value="UniProtKB-KW"/>
</dbReference>
<dbReference type="GO" id="GO:0009107">
    <property type="term" value="P:lipoate biosynthetic process"/>
    <property type="evidence" value="ECO:0000318"/>
    <property type="project" value="GO_Central"/>
</dbReference>
<dbReference type="CDD" id="cd01335">
    <property type="entry name" value="Radical_SAM"/>
    <property type="match status" value="1"/>
</dbReference>
<dbReference type="FunFam" id="3.20.20.70:FF:000036">
    <property type="entry name" value="Lipoyl synthase, mitochondrial"/>
    <property type="match status" value="1"/>
</dbReference>
<dbReference type="Gene3D" id="3.20.20.70">
    <property type="entry name" value="Aldolase class I"/>
    <property type="match status" value="1"/>
</dbReference>
<dbReference type="HAMAP" id="MF_00206">
    <property type="entry name" value="Lipoyl_synth"/>
    <property type="match status" value="1"/>
</dbReference>
<dbReference type="InterPro" id="IPR013785">
    <property type="entry name" value="Aldolase_TIM"/>
</dbReference>
<dbReference type="InterPro" id="IPR006638">
    <property type="entry name" value="Elp3/MiaA/NifB-like_rSAM"/>
</dbReference>
<dbReference type="InterPro" id="IPR031691">
    <property type="entry name" value="LIAS_N"/>
</dbReference>
<dbReference type="InterPro" id="IPR003698">
    <property type="entry name" value="Lipoyl_synth"/>
</dbReference>
<dbReference type="InterPro" id="IPR007197">
    <property type="entry name" value="rSAM"/>
</dbReference>
<dbReference type="NCBIfam" id="TIGR00510">
    <property type="entry name" value="lipA"/>
    <property type="match status" value="1"/>
</dbReference>
<dbReference type="NCBIfam" id="NF004019">
    <property type="entry name" value="PRK05481.1"/>
    <property type="match status" value="1"/>
</dbReference>
<dbReference type="NCBIfam" id="NF009544">
    <property type="entry name" value="PRK12928.1"/>
    <property type="match status" value="1"/>
</dbReference>
<dbReference type="PANTHER" id="PTHR10949">
    <property type="entry name" value="LIPOYL SYNTHASE"/>
    <property type="match status" value="1"/>
</dbReference>
<dbReference type="PANTHER" id="PTHR10949:SF0">
    <property type="entry name" value="LIPOYL SYNTHASE, MITOCHONDRIAL"/>
    <property type="match status" value="1"/>
</dbReference>
<dbReference type="Pfam" id="PF16881">
    <property type="entry name" value="LIAS_N"/>
    <property type="match status" value="1"/>
</dbReference>
<dbReference type="Pfam" id="PF04055">
    <property type="entry name" value="Radical_SAM"/>
    <property type="match status" value="1"/>
</dbReference>
<dbReference type="PIRSF" id="PIRSF005963">
    <property type="entry name" value="Lipoyl_synth"/>
    <property type="match status" value="1"/>
</dbReference>
<dbReference type="SFLD" id="SFLDF00271">
    <property type="entry name" value="lipoyl_synthase"/>
    <property type="match status" value="1"/>
</dbReference>
<dbReference type="SFLD" id="SFLDG01058">
    <property type="entry name" value="lipoyl_synthase_like"/>
    <property type="match status" value="1"/>
</dbReference>
<dbReference type="SMART" id="SM00729">
    <property type="entry name" value="Elp3"/>
    <property type="match status" value="1"/>
</dbReference>
<dbReference type="SUPFAM" id="SSF102114">
    <property type="entry name" value="Radical SAM enzymes"/>
    <property type="match status" value="1"/>
</dbReference>
<dbReference type="PROSITE" id="PS51918">
    <property type="entry name" value="RADICAL_SAM"/>
    <property type="match status" value="1"/>
</dbReference>
<feature type="chain" id="PRO_0000398296" description="Lipoyl synthase, mitochondrial">
    <location>
        <begin position="1"/>
        <end position="351"/>
    </location>
</feature>
<feature type="domain" description="Radical SAM core" evidence="2">
    <location>
        <begin position="100"/>
        <end position="319"/>
    </location>
</feature>
<feature type="binding site" evidence="1">
    <location>
        <position position="84"/>
    </location>
    <ligand>
        <name>[4Fe-4S] cluster</name>
        <dbReference type="ChEBI" id="CHEBI:49883"/>
        <label>1</label>
    </ligand>
</feature>
<feature type="binding site" evidence="1">
    <location>
        <position position="89"/>
    </location>
    <ligand>
        <name>[4Fe-4S] cluster</name>
        <dbReference type="ChEBI" id="CHEBI:49883"/>
        <label>1</label>
    </ligand>
</feature>
<feature type="binding site" evidence="1">
    <location>
        <position position="95"/>
    </location>
    <ligand>
        <name>[4Fe-4S] cluster</name>
        <dbReference type="ChEBI" id="CHEBI:49883"/>
        <label>1</label>
    </ligand>
</feature>
<feature type="binding site" evidence="1">
    <location>
        <position position="115"/>
    </location>
    <ligand>
        <name>[4Fe-4S] cluster</name>
        <dbReference type="ChEBI" id="CHEBI:49883"/>
        <label>2</label>
        <note>4Fe-4S-S-AdoMet</note>
    </ligand>
</feature>
<feature type="binding site" evidence="1">
    <location>
        <position position="119"/>
    </location>
    <ligand>
        <name>[4Fe-4S] cluster</name>
        <dbReference type="ChEBI" id="CHEBI:49883"/>
        <label>2</label>
        <note>4Fe-4S-S-AdoMet</note>
    </ligand>
</feature>
<feature type="binding site" evidence="1">
    <location>
        <position position="122"/>
    </location>
    <ligand>
        <name>[4Fe-4S] cluster</name>
        <dbReference type="ChEBI" id="CHEBI:49883"/>
        <label>2</label>
        <note>4Fe-4S-S-AdoMet</note>
    </ligand>
</feature>
<feature type="binding site" evidence="1">
    <location>
        <position position="330"/>
    </location>
    <ligand>
        <name>[4Fe-4S] cluster</name>
        <dbReference type="ChEBI" id="CHEBI:49883"/>
        <label>1</label>
    </ligand>
</feature>
<organism>
    <name type="scientific">Yarrowia lipolytica (strain CLIB 122 / E 150)</name>
    <name type="common">Yeast</name>
    <name type="synonym">Candida lipolytica</name>
    <dbReference type="NCBI Taxonomy" id="284591"/>
    <lineage>
        <taxon>Eukaryota</taxon>
        <taxon>Fungi</taxon>
        <taxon>Dikarya</taxon>
        <taxon>Ascomycota</taxon>
        <taxon>Saccharomycotina</taxon>
        <taxon>Dipodascomycetes</taxon>
        <taxon>Dipodascales</taxon>
        <taxon>Dipodascales incertae sedis</taxon>
        <taxon>Yarrowia</taxon>
    </lineage>
</organism>
<accession>Q6C6C6</accession>
<keyword id="KW-0004">4Fe-4S</keyword>
<keyword id="KW-0408">Iron</keyword>
<keyword id="KW-0411">Iron-sulfur</keyword>
<keyword id="KW-0479">Metal-binding</keyword>
<keyword id="KW-0496">Mitochondrion</keyword>
<keyword id="KW-1185">Reference proteome</keyword>
<keyword id="KW-0949">S-adenosyl-L-methionine</keyword>
<keyword id="KW-0808">Transferase</keyword>
<gene>
    <name type="ordered locus">YALI0E10571g</name>
</gene>